<comment type="cofactor">
    <cofactor evidence="1">
        <name>Fe(2+)</name>
        <dbReference type="ChEBI" id="CHEBI:29033"/>
    </cofactor>
    <text evidence="1">Binds 1 Fe(2+) ion per subunit.</text>
</comment>
<comment type="cofactor">
    <cofactor evidence="1">
        <name>L-ascorbate</name>
        <dbReference type="ChEBI" id="CHEBI:38290"/>
    </cofactor>
</comment>
<protein>
    <recommendedName>
        <fullName evidence="1">PKHD-type hydroxylase BBta_3541</fullName>
        <ecNumber evidence="1">1.14.11.-</ecNumber>
    </recommendedName>
</protein>
<keyword id="KW-0223">Dioxygenase</keyword>
<keyword id="KW-0408">Iron</keyword>
<keyword id="KW-0479">Metal-binding</keyword>
<keyword id="KW-0560">Oxidoreductase</keyword>
<keyword id="KW-1185">Reference proteome</keyword>
<keyword id="KW-0847">Vitamin C</keyword>
<evidence type="ECO:0000255" key="1">
    <source>
        <dbReference type="HAMAP-Rule" id="MF_00657"/>
    </source>
</evidence>
<reference key="1">
    <citation type="journal article" date="2007" name="Science">
        <title>Legumes symbioses: absence of nod genes in photosynthetic bradyrhizobia.</title>
        <authorList>
            <person name="Giraud E."/>
            <person name="Moulin L."/>
            <person name="Vallenet D."/>
            <person name="Barbe V."/>
            <person name="Cytryn E."/>
            <person name="Avarre J.-C."/>
            <person name="Jaubert M."/>
            <person name="Simon D."/>
            <person name="Cartieaux F."/>
            <person name="Prin Y."/>
            <person name="Bena G."/>
            <person name="Hannibal L."/>
            <person name="Fardoux J."/>
            <person name="Kojadinovic M."/>
            <person name="Vuillet L."/>
            <person name="Lajus A."/>
            <person name="Cruveiller S."/>
            <person name="Rouy Z."/>
            <person name="Mangenot S."/>
            <person name="Segurens B."/>
            <person name="Dossat C."/>
            <person name="Franck W.L."/>
            <person name="Chang W.-S."/>
            <person name="Saunders E."/>
            <person name="Bruce D."/>
            <person name="Richardson P."/>
            <person name="Normand P."/>
            <person name="Dreyfus B."/>
            <person name="Pignol D."/>
            <person name="Stacey G."/>
            <person name="Emerich D."/>
            <person name="Vermeglio A."/>
            <person name="Medigue C."/>
            <person name="Sadowsky M."/>
        </authorList>
    </citation>
    <scope>NUCLEOTIDE SEQUENCE [LARGE SCALE GENOMIC DNA]</scope>
    <source>
        <strain>BTAi1 / ATCC BAA-1182</strain>
    </source>
</reference>
<name>Y3541_BRASB</name>
<sequence length="229" mass="25563">MLICIPDVLSKDEVAEFRRIMDAAEWEDGRSTAGAQSAMVKRNEQLPPDGEAARMLGQRIITALTRNPRFLSAAVPLQIFPPLFNRYTASRGDHFGIHVDNAVRGDPLTGLRIRTDLSMTLFLAEPDTYDGGELVIEDTYGSHEVKLPAGHAVLYPSSSLHMVTPVTRGARVASFFWMQSMIRDAHVRSMIFDLDTAIQSLTERLGRDDPDAVKLTGIYHNLIRQWAEV</sequence>
<gene>
    <name type="ordered locus">BBta_3541</name>
</gene>
<proteinExistence type="inferred from homology"/>
<feature type="chain" id="PRO_0000346463" description="PKHD-type hydroxylase BBta_3541">
    <location>
        <begin position="1"/>
        <end position="229"/>
    </location>
</feature>
<feature type="domain" description="Fe2OG dioxygenase" evidence="1">
    <location>
        <begin position="78"/>
        <end position="180"/>
    </location>
</feature>
<feature type="binding site" evidence="1">
    <location>
        <position position="98"/>
    </location>
    <ligand>
        <name>Fe cation</name>
        <dbReference type="ChEBI" id="CHEBI:24875"/>
    </ligand>
</feature>
<feature type="binding site" evidence="1">
    <location>
        <position position="100"/>
    </location>
    <ligand>
        <name>Fe cation</name>
        <dbReference type="ChEBI" id="CHEBI:24875"/>
    </ligand>
</feature>
<feature type="binding site" evidence="1">
    <location>
        <position position="161"/>
    </location>
    <ligand>
        <name>Fe cation</name>
        <dbReference type="ChEBI" id="CHEBI:24875"/>
    </ligand>
</feature>
<feature type="binding site" evidence="1">
    <location>
        <position position="171"/>
    </location>
    <ligand>
        <name>2-oxoglutarate</name>
        <dbReference type="ChEBI" id="CHEBI:16810"/>
    </ligand>
</feature>
<dbReference type="EC" id="1.14.11.-" evidence="1"/>
<dbReference type="EMBL" id="CP000494">
    <property type="protein sequence ID" value="ABQ35634.1"/>
    <property type="molecule type" value="Genomic_DNA"/>
</dbReference>
<dbReference type="RefSeq" id="WP_012043644.1">
    <property type="nucleotide sequence ID" value="NC_009485.1"/>
</dbReference>
<dbReference type="SMR" id="A5EHJ0"/>
<dbReference type="STRING" id="288000.BBta_3541"/>
<dbReference type="KEGG" id="bbt:BBta_3541"/>
<dbReference type="eggNOG" id="COG3128">
    <property type="taxonomic scope" value="Bacteria"/>
</dbReference>
<dbReference type="HOGENOM" id="CLU_106663_0_0_5"/>
<dbReference type="OrthoDB" id="9812472at2"/>
<dbReference type="Proteomes" id="UP000000246">
    <property type="component" value="Chromosome"/>
</dbReference>
<dbReference type="GO" id="GO:0016706">
    <property type="term" value="F:2-oxoglutarate-dependent dioxygenase activity"/>
    <property type="evidence" value="ECO:0007669"/>
    <property type="project" value="UniProtKB-UniRule"/>
</dbReference>
<dbReference type="GO" id="GO:0005506">
    <property type="term" value="F:iron ion binding"/>
    <property type="evidence" value="ECO:0007669"/>
    <property type="project" value="UniProtKB-UniRule"/>
</dbReference>
<dbReference type="GO" id="GO:0031418">
    <property type="term" value="F:L-ascorbic acid binding"/>
    <property type="evidence" value="ECO:0007669"/>
    <property type="project" value="UniProtKB-KW"/>
</dbReference>
<dbReference type="GO" id="GO:0006974">
    <property type="term" value="P:DNA damage response"/>
    <property type="evidence" value="ECO:0007669"/>
    <property type="project" value="TreeGrafter"/>
</dbReference>
<dbReference type="GO" id="GO:0006879">
    <property type="term" value="P:intracellular iron ion homeostasis"/>
    <property type="evidence" value="ECO:0007669"/>
    <property type="project" value="TreeGrafter"/>
</dbReference>
<dbReference type="Gene3D" id="2.60.120.620">
    <property type="entry name" value="q2cbj1_9rhob like domain"/>
    <property type="match status" value="1"/>
</dbReference>
<dbReference type="Gene3D" id="4.10.860.20">
    <property type="entry name" value="Rabenosyn, Rab binding domain"/>
    <property type="match status" value="1"/>
</dbReference>
<dbReference type="HAMAP" id="MF_00657">
    <property type="entry name" value="Hydroxyl_YbiX"/>
    <property type="match status" value="1"/>
</dbReference>
<dbReference type="InterPro" id="IPR005123">
    <property type="entry name" value="Oxoglu/Fe-dep_dioxygenase_dom"/>
</dbReference>
<dbReference type="InterPro" id="IPR041097">
    <property type="entry name" value="PKHD_C"/>
</dbReference>
<dbReference type="InterPro" id="IPR023550">
    <property type="entry name" value="PKHD_hydroxylase"/>
</dbReference>
<dbReference type="InterPro" id="IPR006620">
    <property type="entry name" value="Pro_4_hyd_alph"/>
</dbReference>
<dbReference type="InterPro" id="IPR044862">
    <property type="entry name" value="Pro_4_hyd_alph_FE2OG_OXY"/>
</dbReference>
<dbReference type="NCBIfam" id="NF003973">
    <property type="entry name" value="PRK05467.1-2"/>
    <property type="match status" value="1"/>
</dbReference>
<dbReference type="NCBIfam" id="NF003974">
    <property type="entry name" value="PRK05467.1-3"/>
    <property type="match status" value="1"/>
</dbReference>
<dbReference type="NCBIfam" id="NF003975">
    <property type="entry name" value="PRK05467.1-4"/>
    <property type="match status" value="1"/>
</dbReference>
<dbReference type="PANTHER" id="PTHR41536">
    <property type="entry name" value="PKHD-TYPE HYDROXYLASE YBIX"/>
    <property type="match status" value="1"/>
</dbReference>
<dbReference type="PANTHER" id="PTHR41536:SF1">
    <property type="entry name" value="PKHD-TYPE HYDROXYLASE YBIX"/>
    <property type="match status" value="1"/>
</dbReference>
<dbReference type="Pfam" id="PF13640">
    <property type="entry name" value="2OG-FeII_Oxy_3"/>
    <property type="match status" value="1"/>
</dbReference>
<dbReference type="Pfam" id="PF18331">
    <property type="entry name" value="PKHD_C"/>
    <property type="match status" value="1"/>
</dbReference>
<dbReference type="SMART" id="SM00702">
    <property type="entry name" value="P4Hc"/>
    <property type="match status" value="1"/>
</dbReference>
<dbReference type="SUPFAM" id="SSF51197">
    <property type="entry name" value="Clavaminate synthase-like"/>
    <property type="match status" value="1"/>
</dbReference>
<dbReference type="PROSITE" id="PS51471">
    <property type="entry name" value="FE2OG_OXY"/>
    <property type="match status" value="1"/>
</dbReference>
<accession>A5EHJ0</accession>
<organism>
    <name type="scientific">Bradyrhizobium sp. (strain BTAi1 / ATCC BAA-1182)</name>
    <dbReference type="NCBI Taxonomy" id="288000"/>
    <lineage>
        <taxon>Bacteria</taxon>
        <taxon>Pseudomonadati</taxon>
        <taxon>Pseudomonadota</taxon>
        <taxon>Alphaproteobacteria</taxon>
        <taxon>Hyphomicrobiales</taxon>
        <taxon>Nitrobacteraceae</taxon>
        <taxon>Bradyrhizobium</taxon>
    </lineage>
</organism>